<dbReference type="EC" id="3.2.1.204" evidence="3"/>
<dbReference type="EMBL" id="CP001736">
    <property type="protein sequence ID" value="ADB30989.1"/>
    <property type="molecule type" value="Genomic_DNA"/>
</dbReference>
<dbReference type="RefSeq" id="WP_012919545.1">
    <property type="nucleotide sequence ID" value="NC_013729.1"/>
</dbReference>
<dbReference type="PDB" id="5X3I">
    <property type="method" value="X-ray"/>
    <property type="resolution" value="2.10 A"/>
    <property type="chains" value="A/B=1-723"/>
</dbReference>
<dbReference type="PDB" id="5X3J">
    <property type="method" value="X-ray"/>
    <property type="resolution" value="2.30 A"/>
    <property type="chains" value="A/B=1-723"/>
</dbReference>
<dbReference type="PDB" id="5X3K">
    <property type="method" value="X-ray"/>
    <property type="resolution" value="2.50 A"/>
    <property type="chains" value="A/B=1-723"/>
</dbReference>
<dbReference type="PDBsum" id="5X3I"/>
<dbReference type="PDBsum" id="5X3J"/>
<dbReference type="PDBsum" id="5X3K"/>
<dbReference type="SMR" id="D2PPM7"/>
<dbReference type="STRING" id="479435.Kfla_1895"/>
<dbReference type="CAZy" id="GH31">
    <property type="family name" value="Glycoside Hydrolase Family 31"/>
</dbReference>
<dbReference type="KEGG" id="kfl:Kfla_1895"/>
<dbReference type="eggNOG" id="COG1501">
    <property type="taxonomic scope" value="Bacteria"/>
</dbReference>
<dbReference type="HOGENOM" id="CLU_009658_1_0_11"/>
<dbReference type="OrthoDB" id="176168at2"/>
<dbReference type="BioCyc" id="MetaCyc:MONOMER-20073"/>
<dbReference type="BRENDA" id="3.2.1.204">
    <property type="organism ID" value="14106"/>
</dbReference>
<dbReference type="Proteomes" id="UP000007967">
    <property type="component" value="Chromosome"/>
</dbReference>
<dbReference type="GO" id="GO:0005737">
    <property type="term" value="C:cytoplasm"/>
    <property type="evidence" value="ECO:0007669"/>
    <property type="project" value="UniProtKB-SubCell"/>
</dbReference>
<dbReference type="GO" id="GO:0030246">
    <property type="term" value="F:carbohydrate binding"/>
    <property type="evidence" value="ECO:0007669"/>
    <property type="project" value="InterPro"/>
</dbReference>
<dbReference type="GO" id="GO:0004553">
    <property type="term" value="F:hydrolase activity, hydrolyzing O-glycosyl compounds"/>
    <property type="evidence" value="ECO:0007669"/>
    <property type="project" value="InterPro"/>
</dbReference>
<dbReference type="GO" id="GO:0000272">
    <property type="term" value="P:polysaccharide catabolic process"/>
    <property type="evidence" value="ECO:0007669"/>
    <property type="project" value="UniProtKB-KW"/>
</dbReference>
<dbReference type="CDD" id="cd14752">
    <property type="entry name" value="GH31_N"/>
    <property type="match status" value="1"/>
</dbReference>
<dbReference type="CDD" id="cd06597">
    <property type="entry name" value="GH31_transferase_CtsY"/>
    <property type="match status" value="1"/>
</dbReference>
<dbReference type="Gene3D" id="3.20.20.80">
    <property type="entry name" value="Glycosidases"/>
    <property type="match status" value="1"/>
</dbReference>
<dbReference type="Gene3D" id="2.60.40.1760">
    <property type="entry name" value="glycosyl hydrolase (family 31)"/>
    <property type="match status" value="1"/>
</dbReference>
<dbReference type="Gene3D" id="2.60.40.1180">
    <property type="entry name" value="Golgi alpha-mannosidase II"/>
    <property type="match status" value="1"/>
</dbReference>
<dbReference type="Gene3D" id="2.60.40.10">
    <property type="entry name" value="Immunoglobulins"/>
    <property type="match status" value="1"/>
</dbReference>
<dbReference type="InterPro" id="IPR048488">
    <property type="entry name" value="AIMA-like_N"/>
</dbReference>
<dbReference type="InterPro" id="IPR011013">
    <property type="entry name" value="Gal_mutarotase_sf_dom"/>
</dbReference>
<dbReference type="InterPro" id="IPR048395">
    <property type="entry name" value="Glyco_hydro_31_C"/>
</dbReference>
<dbReference type="InterPro" id="IPR025887">
    <property type="entry name" value="Glyco_hydro_31_N_dom"/>
</dbReference>
<dbReference type="InterPro" id="IPR000322">
    <property type="entry name" value="Glyco_hydro_31_TIM"/>
</dbReference>
<dbReference type="InterPro" id="IPR013780">
    <property type="entry name" value="Glyco_hydro_b"/>
</dbReference>
<dbReference type="InterPro" id="IPR017853">
    <property type="entry name" value="Glycoside_hydrolase_SF"/>
</dbReference>
<dbReference type="InterPro" id="IPR051816">
    <property type="entry name" value="Glycosyl_Hydrolase_31"/>
</dbReference>
<dbReference type="InterPro" id="IPR013783">
    <property type="entry name" value="Ig-like_fold"/>
</dbReference>
<dbReference type="PANTHER" id="PTHR43863">
    <property type="entry name" value="HYDROLASE, PUTATIVE (AFU_ORTHOLOGUE AFUA_1G03140)-RELATED"/>
    <property type="match status" value="1"/>
</dbReference>
<dbReference type="PANTHER" id="PTHR43863:SF2">
    <property type="entry name" value="MALTASE-GLUCOAMYLASE"/>
    <property type="match status" value="1"/>
</dbReference>
<dbReference type="Pfam" id="PF21568">
    <property type="entry name" value="AIMA-like_N"/>
    <property type="match status" value="1"/>
</dbReference>
<dbReference type="Pfam" id="PF13802">
    <property type="entry name" value="Gal_mutarotas_2"/>
    <property type="match status" value="1"/>
</dbReference>
<dbReference type="Pfam" id="PF01055">
    <property type="entry name" value="Glyco_hydro_31_2nd"/>
    <property type="match status" value="1"/>
</dbReference>
<dbReference type="Pfam" id="PF21365">
    <property type="entry name" value="Glyco_hydro_31_3rd"/>
    <property type="match status" value="1"/>
</dbReference>
<dbReference type="SUPFAM" id="SSF51445">
    <property type="entry name" value="(Trans)glycosidases"/>
    <property type="match status" value="1"/>
</dbReference>
<dbReference type="SUPFAM" id="SSF74650">
    <property type="entry name" value="Galactose mutarotase-like"/>
    <property type="match status" value="1"/>
</dbReference>
<dbReference type="SUPFAM" id="SSF51011">
    <property type="entry name" value="Glycosyl hydrolase domain"/>
    <property type="match status" value="1"/>
</dbReference>
<feature type="chain" id="PRO_0000443932" description="1,3-alpha-isomaltosidase">
    <location>
        <begin position="1"/>
        <end position="723"/>
    </location>
</feature>
<feature type="active site" description="Nucleophile" evidence="6">
    <location>
        <position position="451"/>
    </location>
</feature>
<feature type="active site" evidence="1">
    <location>
        <position position="454"/>
    </location>
</feature>
<feature type="active site" description="Proton donor" evidence="6">
    <location>
        <position position="516"/>
    </location>
</feature>
<feature type="binding site" evidence="2">
    <location>
        <position position="581"/>
    </location>
    <ligand>
        <name>substrate</name>
    </ligand>
</feature>
<feature type="mutagenesis site" description="Loss of isomaltosidase activity." evidence="3">
    <original>D</original>
    <variation>A</variation>
    <location>
        <position position="451"/>
    </location>
</feature>
<feature type="mutagenesis site" description="Loss of isomaltosidase activity." evidence="3">
    <original>D</original>
    <variation>A</variation>
    <location>
        <position position="516"/>
    </location>
</feature>
<feature type="turn" evidence="9">
    <location>
        <begin position="6"/>
        <end position="9"/>
    </location>
</feature>
<feature type="strand" evidence="9">
    <location>
        <begin position="19"/>
        <end position="24"/>
    </location>
</feature>
<feature type="strand" evidence="9">
    <location>
        <begin position="32"/>
        <end position="36"/>
    </location>
</feature>
<feature type="strand" evidence="9">
    <location>
        <begin position="41"/>
        <end position="47"/>
    </location>
</feature>
<feature type="strand" evidence="9">
    <location>
        <begin position="50"/>
        <end position="53"/>
    </location>
</feature>
<feature type="helix" evidence="10">
    <location>
        <begin position="63"/>
        <end position="67"/>
    </location>
</feature>
<feature type="turn" evidence="10">
    <location>
        <begin position="71"/>
        <end position="73"/>
    </location>
</feature>
<feature type="helix" evidence="9">
    <location>
        <begin position="76"/>
        <end position="81"/>
    </location>
</feature>
<feature type="strand" evidence="9">
    <location>
        <begin position="87"/>
        <end position="91"/>
    </location>
</feature>
<feature type="strand" evidence="9">
    <location>
        <begin position="99"/>
        <end position="107"/>
    </location>
</feature>
<feature type="strand" evidence="9">
    <location>
        <begin position="110"/>
        <end position="113"/>
    </location>
</feature>
<feature type="strand" evidence="9">
    <location>
        <begin position="117"/>
        <end position="119"/>
    </location>
</feature>
<feature type="strand" evidence="9">
    <location>
        <begin position="122"/>
        <end position="126"/>
    </location>
</feature>
<feature type="strand" evidence="9">
    <location>
        <begin position="131"/>
        <end position="134"/>
    </location>
</feature>
<feature type="helix" evidence="9">
    <location>
        <begin position="136"/>
        <end position="138"/>
    </location>
</feature>
<feature type="strand" evidence="9">
    <location>
        <begin position="139"/>
        <end position="147"/>
    </location>
</feature>
<feature type="strand" evidence="9">
    <location>
        <begin position="150"/>
        <end position="159"/>
    </location>
</feature>
<feature type="strand" evidence="9">
    <location>
        <begin position="165"/>
        <end position="171"/>
    </location>
</feature>
<feature type="strand" evidence="9">
    <location>
        <begin position="182"/>
        <end position="185"/>
    </location>
</feature>
<feature type="helix" evidence="9">
    <location>
        <begin position="194"/>
        <end position="197"/>
    </location>
</feature>
<feature type="strand" evidence="9">
    <location>
        <begin position="201"/>
        <end position="210"/>
    </location>
</feature>
<feature type="strand" evidence="9">
    <location>
        <begin position="212"/>
        <end position="214"/>
    </location>
</feature>
<feature type="strand" evidence="9">
    <location>
        <begin position="217"/>
        <end position="221"/>
    </location>
</feature>
<feature type="strand" evidence="9">
    <location>
        <begin position="227"/>
        <end position="232"/>
    </location>
</feature>
<feature type="strand" evidence="9">
    <location>
        <begin position="235"/>
        <end position="241"/>
    </location>
</feature>
<feature type="strand" evidence="9">
    <location>
        <begin position="247"/>
        <end position="256"/>
    </location>
</feature>
<feature type="helix" evidence="9">
    <location>
        <begin position="257"/>
        <end position="268"/>
    </location>
</feature>
<feature type="helix" evidence="9">
    <location>
        <begin position="276"/>
        <end position="279"/>
    </location>
</feature>
<feature type="strand" evidence="9">
    <location>
        <begin position="282"/>
        <end position="284"/>
    </location>
</feature>
<feature type="helix" evidence="9">
    <location>
        <begin position="291"/>
        <end position="303"/>
    </location>
</feature>
<feature type="strand" evidence="9">
    <location>
        <begin position="309"/>
        <end position="315"/>
    </location>
</feature>
<feature type="strand" evidence="9">
    <location>
        <begin position="319"/>
        <end position="325"/>
    </location>
</feature>
<feature type="helix" evidence="9">
    <location>
        <begin position="341"/>
        <end position="343"/>
    </location>
</feature>
<feature type="helix" evidence="9">
    <location>
        <begin position="355"/>
        <end position="364"/>
    </location>
</feature>
<feature type="strand" evidence="9">
    <location>
        <begin position="368"/>
        <end position="373"/>
    </location>
</feature>
<feature type="helix" evidence="9">
    <location>
        <begin position="384"/>
        <end position="395"/>
    </location>
</feature>
<feature type="strand" evidence="9">
    <location>
        <begin position="405"/>
        <end position="407"/>
    </location>
</feature>
<feature type="strand" evidence="9">
    <location>
        <begin position="412"/>
        <end position="415"/>
    </location>
</feature>
<feature type="helix" evidence="9">
    <location>
        <begin position="426"/>
        <end position="434"/>
    </location>
</feature>
<feature type="helix" evidence="9">
    <location>
        <begin position="437"/>
        <end position="441"/>
    </location>
</feature>
<feature type="strand" evidence="9">
    <location>
        <begin position="447"/>
        <end position="450"/>
    </location>
</feature>
<feature type="helix" evidence="9">
    <location>
        <begin position="469"/>
        <end position="472"/>
    </location>
</feature>
<feature type="turn" evidence="9">
    <location>
        <begin position="473"/>
        <end position="475"/>
    </location>
</feature>
<feature type="helix" evidence="9">
    <location>
        <begin position="476"/>
        <end position="490"/>
    </location>
</feature>
<feature type="strand" evidence="9">
    <location>
        <begin position="497"/>
        <end position="500"/>
    </location>
</feature>
<feature type="helix" evidence="9">
    <location>
        <begin position="506"/>
        <end position="508"/>
    </location>
</feature>
<feature type="strand" evidence="9">
    <location>
        <begin position="509"/>
        <end position="513"/>
    </location>
</feature>
<feature type="strand" evidence="9">
    <location>
        <begin position="518"/>
        <end position="520"/>
    </location>
</feature>
<feature type="helix" evidence="9">
    <location>
        <begin position="521"/>
        <end position="536"/>
    </location>
</feature>
<feature type="strand" evidence="9">
    <location>
        <begin position="541"/>
        <end position="545"/>
    </location>
</feature>
<feature type="strand" evidence="9">
    <location>
        <begin position="549"/>
        <end position="552"/>
    </location>
</feature>
<feature type="helix" evidence="9">
    <location>
        <begin position="556"/>
        <end position="566"/>
    </location>
</feature>
<feature type="strand" evidence="9">
    <location>
        <begin position="569"/>
        <end position="573"/>
    </location>
</feature>
<feature type="helix" evidence="9">
    <location>
        <begin position="590"/>
        <end position="597"/>
    </location>
</feature>
<feature type="helix" evidence="9">
    <location>
        <begin position="602"/>
        <end position="630"/>
    </location>
</feature>
<feature type="strand" evidence="9">
    <location>
        <begin position="634"/>
        <end position="636"/>
    </location>
</feature>
<feature type="helix" evidence="9">
    <location>
        <begin position="638"/>
        <end position="640"/>
    </location>
</feature>
<feature type="helix" evidence="9">
    <location>
        <begin position="646"/>
        <end position="650"/>
    </location>
</feature>
<feature type="strand" evidence="9">
    <location>
        <begin position="655"/>
        <end position="657"/>
    </location>
</feature>
<feature type="turn" evidence="9">
    <location>
        <begin position="658"/>
        <end position="660"/>
    </location>
</feature>
<feature type="strand" evidence="9">
    <location>
        <begin position="661"/>
        <end position="663"/>
    </location>
</feature>
<feature type="strand" evidence="9">
    <location>
        <begin position="672"/>
        <end position="678"/>
    </location>
</feature>
<feature type="strand" evidence="9">
    <location>
        <begin position="683"/>
        <end position="685"/>
    </location>
</feature>
<feature type="turn" evidence="9">
    <location>
        <begin position="686"/>
        <end position="688"/>
    </location>
</feature>
<feature type="strand" evidence="9">
    <location>
        <begin position="694"/>
        <end position="700"/>
    </location>
</feature>
<feature type="strand" evidence="9">
    <location>
        <begin position="708"/>
        <end position="711"/>
    </location>
</feature>
<feature type="helix" evidence="9">
    <location>
        <begin position="712"/>
        <end position="714"/>
    </location>
</feature>
<feature type="helix" evidence="9">
    <location>
        <begin position="715"/>
        <end position="722"/>
    </location>
</feature>
<protein>
    <recommendedName>
        <fullName evidence="4">1,3-alpha-isomaltosidase</fullName>
        <ecNumber evidence="3">3.2.1.204</ecNumber>
    </recommendedName>
</protein>
<organism>
    <name type="scientific">Kribbella flavida (strain DSM 17836 / JCM 10339 / NBRC 14399)</name>
    <dbReference type="NCBI Taxonomy" id="479435"/>
    <lineage>
        <taxon>Bacteria</taxon>
        <taxon>Bacillati</taxon>
        <taxon>Actinomycetota</taxon>
        <taxon>Actinomycetes</taxon>
        <taxon>Propionibacteriales</taxon>
        <taxon>Kribbellaceae</taxon>
        <taxon>Kribbella</taxon>
    </lineage>
</organism>
<reference key="1">
    <citation type="submission" date="2009-09" db="EMBL/GenBank/DDBJ databases">
        <title>The complete genome of Kribbella flavida DSM 17836.</title>
        <authorList>
            <consortium name="US DOE Joint Genome Institute (JGI-PGF)"/>
            <person name="Lucas S."/>
            <person name="Copeland A."/>
            <person name="Lapidus A."/>
            <person name="Glavina del Rio T."/>
            <person name="Dalin E."/>
            <person name="Tice H."/>
            <person name="Bruce D."/>
            <person name="Goodwin L."/>
            <person name="Pitluck S."/>
            <person name="Kyrpides N."/>
            <person name="Mavromatis K."/>
            <person name="Ivanova N."/>
            <person name="Saunders E."/>
            <person name="Brettin T."/>
            <person name="Detter J.C."/>
            <person name="Han C."/>
            <person name="Larimer F."/>
            <person name="Land M."/>
            <person name="Hauser L."/>
            <person name="Markowitz V."/>
            <person name="Cheng J.-F."/>
            <person name="Hugenholtz P."/>
            <person name="Woyke T."/>
            <person name="Wu D."/>
            <person name="Pukall R."/>
            <person name="Klenk H.-P."/>
            <person name="Eisen J.A."/>
        </authorList>
    </citation>
    <scope>NUCLEOTIDE SEQUENCE [LARGE SCALE GENOMIC DNA]</scope>
    <source>
        <strain evidence="8">DSM 17836 / JCM 10339 / NBRC 14399</strain>
    </source>
</reference>
<reference key="2">
    <citation type="journal article" date="2016" name="J. Biol. Chem.">
        <title>Two novel glycoside hydrolases responsible for the catabolism of cyclobis-(1-&gt;6)-alpha-nigerosyl.</title>
        <authorList>
            <person name="Tagami T."/>
            <person name="Miyano E."/>
            <person name="Sadahiro J."/>
            <person name="Okuyama M."/>
            <person name="Iwasaki T."/>
            <person name="Kimura A."/>
        </authorList>
    </citation>
    <scope>FUNCTION</scope>
    <scope>CATALYTIC ACTIVITY</scope>
    <scope>BIOPHYSICOCHEMICAL PROPERTIES</scope>
    <scope>MUTAGENESIS OF ASP-451 AND ASP-516</scope>
    <scope>SUBCELLULAR LOCATION</scope>
    <scope>ACTIVE SITE</scope>
    <scope>SUBSTRATE SPECIFICITY</scope>
    <source>
        <strain>DSM 17836 / JCM 10339 / NBRC 14399</strain>
    </source>
</reference>
<comment type="function">
    <text evidence="3">Involved in the intracellular degradation of the cyclic tetrasaccharide cyclobis-(1-6)-alpha-nigerosyl (CNN) formed extracellularly from starch. Catalyzes the hydrolysis of the alpha-1,3-glucosidic linkage of cyclobis-(1-6)-alpha-nigerosyl (CNN) to yield isomaltose via a possible linear tetrasaccharide. It has a strong preference for the alpha-(1-3)-isomaltosyl moiety.</text>
</comment>
<comment type="catalytic activity">
    <reaction evidence="3">
        <text>cyclobis-(1-&gt;3)-alpha-D-isomaltosyl + 2 H2O = 2 isomaltose</text>
        <dbReference type="Rhea" id="RHEA:24844"/>
        <dbReference type="ChEBI" id="CHEBI:15377"/>
        <dbReference type="ChEBI" id="CHEBI:28189"/>
        <dbReference type="ChEBI" id="CHEBI:136822"/>
        <dbReference type="EC" id="3.2.1.204"/>
    </reaction>
</comment>
<comment type="biophysicochemical properties">
    <kinetics>
        <KM evidence="3">7.63 mM for cyclobis-(1-6)-alpha-nigerosyl (CNN)</KM>
        <text evidence="3">kcat is 22.3 sec(-1) for cyclobis-(1-6)-alpha-nigerosyl (CNN) as substrate.</text>
    </kinetics>
    <phDependence>
        <text evidence="3">Optimum pH is 7.9.</text>
    </phDependence>
    <temperatureDependence>
        <text evidence="3">Optimum temperature is under 41 degrees Celsius.</text>
    </temperatureDependence>
</comment>
<comment type="subcellular location">
    <subcellularLocation>
        <location evidence="6">Cytoplasm</location>
    </subcellularLocation>
</comment>
<comment type="similarity">
    <text evidence="5">Belongs to the glycosyl hydrolase 31 family.</text>
</comment>
<keyword id="KW-0002">3D-structure</keyword>
<keyword id="KW-0119">Carbohydrate metabolism</keyword>
<keyword id="KW-0963">Cytoplasm</keyword>
<keyword id="KW-0326">Glycosidase</keyword>
<keyword id="KW-0378">Hydrolase</keyword>
<keyword id="KW-0624">Polysaccharide degradation</keyword>
<keyword id="KW-1185">Reference proteome</keyword>
<proteinExistence type="evidence at protein level"/>
<sequence>MIKHRPHGIEHPYAVSPDQRVPVLPLAGEPVLLGVVAPEADRVVCEWGTLELPLSATSAAAADAAALAGGEGHLSEAQAKSLGADGAWSVQTPPLAEPVKYRFHAHRGGAAESTEWFEVSPAVWTADGVGEVRGGGERVRGVEWLVSSQGVHRGRFRLQLQDGDRLVGFGERYDALDQRGRELDAVVFEQYKAQGVHGRTYLPMPFAHVVGADGNGWGFHVRTSRRTWYSSAGNELTVEVALGDEPVVDLAIYEGDPATVLTGFLDEVGRAEELPGWVFRLWASGNEWNTQQLVTARMDTHRDLAIPVGAVVIEAWSDEQGITIWRDAVYAVTEDGSAHRAEDFSYRPDGAWPDPKAMIDELHARGIKVILWQIPLQKTEFSTGQVAADAAAMVRDGHAVLEADGTAYRNRGWWFPQALMPDLSVQRTRDWWTEKRRYLVEHFDVDGFKTDGGEHAWGHDLVYADGRKGDEGNNLYPVHYARAFGDLLRSAGKAPVTFSRAGFTGSQAHGIFWAGDEDSTWQAFRSSVTAGLTAASCGIVYWGWDLAGFSGPVPDAELYLRAAAASAFMPIMQYHSEFNHHQLPLRDRTPWHVAETTGDDRVVPLFRRFATLRESLVPYLTEQAARTIATDRPLMRPLFFDHENDPEIWNHPYQYLLGDELLINPVLEPGATTWTTYLPAGEWIDVWTGDRVPSGLVTRDVPLEVVPVYCRASRWSELQPVFS</sequence>
<name>AIMA_KRIFD</name>
<gene>
    <name evidence="7" type="ordered locus">Kfla_1895</name>
</gene>
<accession>D2PPM7</accession>
<evidence type="ECO:0000250" key="1">
    <source>
        <dbReference type="UniProtKB" id="P31434"/>
    </source>
</evidence>
<evidence type="ECO:0000250" key="2">
    <source>
        <dbReference type="UniProtKB" id="P32138"/>
    </source>
</evidence>
<evidence type="ECO:0000269" key="3">
    <source>
    </source>
</evidence>
<evidence type="ECO:0000303" key="4">
    <source>
    </source>
</evidence>
<evidence type="ECO:0000305" key="5"/>
<evidence type="ECO:0000305" key="6">
    <source>
    </source>
</evidence>
<evidence type="ECO:0000312" key="7">
    <source>
        <dbReference type="EMBL" id="ADB30989.1"/>
    </source>
</evidence>
<evidence type="ECO:0000312" key="8">
    <source>
        <dbReference type="Proteomes" id="UP000007967"/>
    </source>
</evidence>
<evidence type="ECO:0007829" key="9">
    <source>
        <dbReference type="PDB" id="5X3I"/>
    </source>
</evidence>
<evidence type="ECO:0007829" key="10">
    <source>
        <dbReference type="PDB" id="5X3J"/>
    </source>
</evidence>